<accession>Q605B5</accession>
<sequence length="275" mass="30251">MALIKQKPTSAGARFVTRVRSEELYKGEPYAKLLEKQTRSSGRNNQGRVTTRHKGGGHKQFYRIVDFKRDKIDIPARVERIEYDPNRTAYIALVLYRDGERRYIVAPAGLSAGSEIVAGEFAAIKVGNSLPLRNIPVGTVVHCVEGKPGKGAQYARSAGTSIQLVAKEGEYATLRMRSGEMRKVLADCKATIGEVSNNEHNLVSLGKAGASRWRGVRPTVRGVAMNPVDHPHGGGEGRTSGGRHPVSPWGIPTKGYKTRNNKRTDGLIIRRRKTR</sequence>
<comment type="function">
    <text evidence="1">One of the primary rRNA binding proteins. Required for association of the 30S and 50S subunits to form the 70S ribosome, for tRNA binding and peptide bond formation. It has been suggested to have peptidyltransferase activity; this is somewhat controversial. Makes several contacts with the 16S rRNA in the 70S ribosome.</text>
</comment>
<comment type="subunit">
    <text evidence="1">Part of the 50S ribosomal subunit. Forms a bridge to the 30S subunit in the 70S ribosome.</text>
</comment>
<comment type="similarity">
    <text evidence="1">Belongs to the universal ribosomal protein uL2 family.</text>
</comment>
<comment type="sequence caution" evidence="3">
    <conflict type="erroneous initiation">
        <sequence resource="EMBL-CDS" id="AAU91459"/>
    </conflict>
</comment>
<feature type="chain" id="PRO_0000237205" description="Large ribosomal subunit protein uL2">
    <location>
        <begin position="1"/>
        <end position="275"/>
    </location>
</feature>
<feature type="region of interest" description="Disordered" evidence="2">
    <location>
        <begin position="35"/>
        <end position="55"/>
    </location>
</feature>
<feature type="region of interest" description="Disordered" evidence="2">
    <location>
        <begin position="223"/>
        <end position="260"/>
    </location>
</feature>
<feature type="compositionally biased region" description="Polar residues" evidence="2">
    <location>
        <begin position="39"/>
        <end position="49"/>
    </location>
</feature>
<proteinExistence type="inferred from homology"/>
<gene>
    <name evidence="1" type="primary">rplB</name>
    <name type="ordered locus">MCA2369</name>
</gene>
<evidence type="ECO:0000255" key="1">
    <source>
        <dbReference type="HAMAP-Rule" id="MF_01320"/>
    </source>
</evidence>
<evidence type="ECO:0000256" key="2">
    <source>
        <dbReference type="SAM" id="MobiDB-lite"/>
    </source>
</evidence>
<evidence type="ECO:0000305" key="3"/>
<reference key="1">
    <citation type="journal article" date="2004" name="PLoS Biol.">
        <title>Genomic insights into methanotrophy: the complete genome sequence of Methylococcus capsulatus (Bath).</title>
        <authorList>
            <person name="Ward N.L."/>
            <person name="Larsen O."/>
            <person name="Sakwa J."/>
            <person name="Bruseth L."/>
            <person name="Khouri H.M."/>
            <person name="Durkin A.S."/>
            <person name="Dimitrov G."/>
            <person name="Jiang L."/>
            <person name="Scanlan D."/>
            <person name="Kang K.H."/>
            <person name="Lewis M.R."/>
            <person name="Nelson K.E."/>
            <person name="Methe B.A."/>
            <person name="Wu M."/>
            <person name="Heidelberg J.F."/>
            <person name="Paulsen I.T."/>
            <person name="Fouts D.E."/>
            <person name="Ravel J."/>
            <person name="Tettelin H."/>
            <person name="Ren Q."/>
            <person name="Read T.D."/>
            <person name="DeBoy R.T."/>
            <person name="Seshadri R."/>
            <person name="Salzberg S.L."/>
            <person name="Jensen H.B."/>
            <person name="Birkeland N.K."/>
            <person name="Nelson W.C."/>
            <person name="Dodson R.J."/>
            <person name="Grindhaug S.H."/>
            <person name="Holt I.E."/>
            <person name="Eidhammer I."/>
            <person name="Jonasen I."/>
            <person name="Vanaken S."/>
            <person name="Utterback T.R."/>
            <person name="Feldblyum T.V."/>
            <person name="Fraser C.M."/>
            <person name="Lillehaug J.R."/>
            <person name="Eisen J.A."/>
        </authorList>
    </citation>
    <scope>NUCLEOTIDE SEQUENCE [LARGE SCALE GENOMIC DNA]</scope>
    <source>
        <strain>ATCC 33009 / NCIMB 11132 / Bath</strain>
    </source>
</reference>
<protein>
    <recommendedName>
        <fullName evidence="1">Large ribosomal subunit protein uL2</fullName>
    </recommendedName>
    <alternativeName>
        <fullName evidence="3">50S ribosomal protein L2</fullName>
    </alternativeName>
</protein>
<organism>
    <name type="scientific">Methylococcus capsulatus (strain ATCC 33009 / NCIMB 11132 / Bath)</name>
    <dbReference type="NCBI Taxonomy" id="243233"/>
    <lineage>
        <taxon>Bacteria</taxon>
        <taxon>Pseudomonadati</taxon>
        <taxon>Pseudomonadota</taxon>
        <taxon>Gammaproteobacteria</taxon>
        <taxon>Methylococcales</taxon>
        <taxon>Methylococcaceae</taxon>
        <taxon>Methylococcus</taxon>
    </lineage>
</organism>
<keyword id="KW-1185">Reference proteome</keyword>
<keyword id="KW-0687">Ribonucleoprotein</keyword>
<keyword id="KW-0689">Ribosomal protein</keyword>
<keyword id="KW-0694">RNA-binding</keyword>
<keyword id="KW-0699">rRNA-binding</keyword>
<name>RL2_METCA</name>
<dbReference type="EMBL" id="AE017282">
    <property type="protein sequence ID" value="AAU91459.1"/>
    <property type="status" value="ALT_INIT"/>
    <property type="molecule type" value="Genomic_DNA"/>
</dbReference>
<dbReference type="RefSeq" id="WP_010961597.1">
    <property type="nucleotide sequence ID" value="NC_002977.6"/>
</dbReference>
<dbReference type="SMR" id="Q605B5"/>
<dbReference type="STRING" id="243233.MCA2369"/>
<dbReference type="GeneID" id="88224571"/>
<dbReference type="KEGG" id="mca:MCA2369"/>
<dbReference type="eggNOG" id="COG0090">
    <property type="taxonomic scope" value="Bacteria"/>
</dbReference>
<dbReference type="HOGENOM" id="CLU_036235_2_1_6"/>
<dbReference type="Proteomes" id="UP000006821">
    <property type="component" value="Chromosome"/>
</dbReference>
<dbReference type="GO" id="GO:0015934">
    <property type="term" value="C:large ribosomal subunit"/>
    <property type="evidence" value="ECO:0007669"/>
    <property type="project" value="InterPro"/>
</dbReference>
<dbReference type="GO" id="GO:0019843">
    <property type="term" value="F:rRNA binding"/>
    <property type="evidence" value="ECO:0007669"/>
    <property type="project" value="UniProtKB-UniRule"/>
</dbReference>
<dbReference type="GO" id="GO:0003735">
    <property type="term" value="F:structural constituent of ribosome"/>
    <property type="evidence" value="ECO:0007669"/>
    <property type="project" value="InterPro"/>
</dbReference>
<dbReference type="GO" id="GO:0016740">
    <property type="term" value="F:transferase activity"/>
    <property type="evidence" value="ECO:0007669"/>
    <property type="project" value="InterPro"/>
</dbReference>
<dbReference type="GO" id="GO:0002181">
    <property type="term" value="P:cytoplasmic translation"/>
    <property type="evidence" value="ECO:0007669"/>
    <property type="project" value="TreeGrafter"/>
</dbReference>
<dbReference type="FunFam" id="2.30.30.30:FF:000001">
    <property type="entry name" value="50S ribosomal protein L2"/>
    <property type="match status" value="1"/>
</dbReference>
<dbReference type="FunFam" id="2.40.50.140:FF:000003">
    <property type="entry name" value="50S ribosomal protein L2"/>
    <property type="match status" value="1"/>
</dbReference>
<dbReference type="FunFam" id="4.10.950.10:FF:000001">
    <property type="entry name" value="50S ribosomal protein L2"/>
    <property type="match status" value="1"/>
</dbReference>
<dbReference type="Gene3D" id="2.30.30.30">
    <property type="match status" value="1"/>
</dbReference>
<dbReference type="Gene3D" id="2.40.50.140">
    <property type="entry name" value="Nucleic acid-binding proteins"/>
    <property type="match status" value="1"/>
</dbReference>
<dbReference type="Gene3D" id="4.10.950.10">
    <property type="entry name" value="Ribosomal protein L2, domain 3"/>
    <property type="match status" value="1"/>
</dbReference>
<dbReference type="HAMAP" id="MF_01320_B">
    <property type="entry name" value="Ribosomal_uL2_B"/>
    <property type="match status" value="1"/>
</dbReference>
<dbReference type="InterPro" id="IPR012340">
    <property type="entry name" value="NA-bd_OB-fold"/>
</dbReference>
<dbReference type="InterPro" id="IPR014722">
    <property type="entry name" value="Rib_uL2_dom2"/>
</dbReference>
<dbReference type="InterPro" id="IPR002171">
    <property type="entry name" value="Ribosomal_uL2"/>
</dbReference>
<dbReference type="InterPro" id="IPR005880">
    <property type="entry name" value="Ribosomal_uL2_bac/org-type"/>
</dbReference>
<dbReference type="InterPro" id="IPR022669">
    <property type="entry name" value="Ribosomal_uL2_C"/>
</dbReference>
<dbReference type="InterPro" id="IPR022671">
    <property type="entry name" value="Ribosomal_uL2_CS"/>
</dbReference>
<dbReference type="InterPro" id="IPR014726">
    <property type="entry name" value="Ribosomal_uL2_dom3"/>
</dbReference>
<dbReference type="InterPro" id="IPR022666">
    <property type="entry name" value="Ribosomal_uL2_RNA-bd_dom"/>
</dbReference>
<dbReference type="InterPro" id="IPR008991">
    <property type="entry name" value="Translation_prot_SH3-like_sf"/>
</dbReference>
<dbReference type="NCBIfam" id="TIGR01171">
    <property type="entry name" value="rplB_bact"/>
    <property type="match status" value="1"/>
</dbReference>
<dbReference type="PANTHER" id="PTHR13691:SF5">
    <property type="entry name" value="LARGE RIBOSOMAL SUBUNIT PROTEIN UL2M"/>
    <property type="match status" value="1"/>
</dbReference>
<dbReference type="PANTHER" id="PTHR13691">
    <property type="entry name" value="RIBOSOMAL PROTEIN L2"/>
    <property type="match status" value="1"/>
</dbReference>
<dbReference type="Pfam" id="PF00181">
    <property type="entry name" value="Ribosomal_L2"/>
    <property type="match status" value="1"/>
</dbReference>
<dbReference type="Pfam" id="PF03947">
    <property type="entry name" value="Ribosomal_L2_C"/>
    <property type="match status" value="1"/>
</dbReference>
<dbReference type="PIRSF" id="PIRSF002158">
    <property type="entry name" value="Ribosomal_L2"/>
    <property type="match status" value="1"/>
</dbReference>
<dbReference type="SMART" id="SM01383">
    <property type="entry name" value="Ribosomal_L2"/>
    <property type="match status" value="1"/>
</dbReference>
<dbReference type="SMART" id="SM01382">
    <property type="entry name" value="Ribosomal_L2_C"/>
    <property type="match status" value="1"/>
</dbReference>
<dbReference type="SUPFAM" id="SSF50249">
    <property type="entry name" value="Nucleic acid-binding proteins"/>
    <property type="match status" value="1"/>
</dbReference>
<dbReference type="SUPFAM" id="SSF50104">
    <property type="entry name" value="Translation proteins SH3-like domain"/>
    <property type="match status" value="1"/>
</dbReference>
<dbReference type="PROSITE" id="PS00467">
    <property type="entry name" value="RIBOSOMAL_L2"/>
    <property type="match status" value="1"/>
</dbReference>